<dbReference type="EMBL" id="CP000033">
    <property type="protein sequence ID" value="AAV43101.1"/>
    <property type="molecule type" value="Genomic_DNA"/>
</dbReference>
<dbReference type="RefSeq" id="WP_003547837.1">
    <property type="nucleotide sequence ID" value="NC_006814.3"/>
</dbReference>
<dbReference type="RefSeq" id="YP_194132.1">
    <property type="nucleotide sequence ID" value="NC_006814.3"/>
</dbReference>
<dbReference type="SMR" id="Q5FJM3"/>
<dbReference type="STRING" id="272621.LBA1270"/>
<dbReference type="GeneID" id="93289642"/>
<dbReference type="KEGG" id="lac:LBA1270"/>
<dbReference type="PATRIC" id="fig|272621.13.peg.1203"/>
<dbReference type="eggNOG" id="COG0052">
    <property type="taxonomic scope" value="Bacteria"/>
</dbReference>
<dbReference type="HOGENOM" id="CLU_040318_1_2_9"/>
<dbReference type="OrthoDB" id="9808036at2"/>
<dbReference type="BioCyc" id="LACI272621:G1G49-1251-MONOMER"/>
<dbReference type="Proteomes" id="UP000006381">
    <property type="component" value="Chromosome"/>
</dbReference>
<dbReference type="GO" id="GO:0022627">
    <property type="term" value="C:cytosolic small ribosomal subunit"/>
    <property type="evidence" value="ECO:0007669"/>
    <property type="project" value="TreeGrafter"/>
</dbReference>
<dbReference type="GO" id="GO:0003735">
    <property type="term" value="F:structural constituent of ribosome"/>
    <property type="evidence" value="ECO:0007669"/>
    <property type="project" value="InterPro"/>
</dbReference>
<dbReference type="GO" id="GO:0006412">
    <property type="term" value="P:translation"/>
    <property type="evidence" value="ECO:0007669"/>
    <property type="project" value="UniProtKB-UniRule"/>
</dbReference>
<dbReference type="CDD" id="cd01425">
    <property type="entry name" value="RPS2"/>
    <property type="match status" value="1"/>
</dbReference>
<dbReference type="FunFam" id="1.10.287.610:FF:000001">
    <property type="entry name" value="30S ribosomal protein S2"/>
    <property type="match status" value="1"/>
</dbReference>
<dbReference type="Gene3D" id="3.40.50.10490">
    <property type="entry name" value="Glucose-6-phosphate isomerase like protein, domain 1"/>
    <property type="match status" value="1"/>
</dbReference>
<dbReference type="Gene3D" id="1.10.287.610">
    <property type="entry name" value="Helix hairpin bin"/>
    <property type="match status" value="1"/>
</dbReference>
<dbReference type="HAMAP" id="MF_00291_B">
    <property type="entry name" value="Ribosomal_uS2_B"/>
    <property type="match status" value="1"/>
</dbReference>
<dbReference type="InterPro" id="IPR001865">
    <property type="entry name" value="Ribosomal_uS2"/>
</dbReference>
<dbReference type="InterPro" id="IPR005706">
    <property type="entry name" value="Ribosomal_uS2_bac/mit/plastid"/>
</dbReference>
<dbReference type="InterPro" id="IPR018130">
    <property type="entry name" value="Ribosomal_uS2_CS"/>
</dbReference>
<dbReference type="InterPro" id="IPR023591">
    <property type="entry name" value="Ribosomal_uS2_flav_dom_sf"/>
</dbReference>
<dbReference type="NCBIfam" id="TIGR01011">
    <property type="entry name" value="rpsB_bact"/>
    <property type="match status" value="1"/>
</dbReference>
<dbReference type="PANTHER" id="PTHR12534">
    <property type="entry name" value="30S RIBOSOMAL PROTEIN S2 PROKARYOTIC AND ORGANELLAR"/>
    <property type="match status" value="1"/>
</dbReference>
<dbReference type="PANTHER" id="PTHR12534:SF0">
    <property type="entry name" value="SMALL RIBOSOMAL SUBUNIT PROTEIN US2M"/>
    <property type="match status" value="1"/>
</dbReference>
<dbReference type="Pfam" id="PF00318">
    <property type="entry name" value="Ribosomal_S2"/>
    <property type="match status" value="1"/>
</dbReference>
<dbReference type="PRINTS" id="PR00395">
    <property type="entry name" value="RIBOSOMALS2"/>
</dbReference>
<dbReference type="SUPFAM" id="SSF52313">
    <property type="entry name" value="Ribosomal protein S2"/>
    <property type="match status" value="1"/>
</dbReference>
<dbReference type="PROSITE" id="PS00962">
    <property type="entry name" value="RIBOSOMAL_S2_1"/>
    <property type="match status" value="1"/>
</dbReference>
<dbReference type="PROSITE" id="PS00963">
    <property type="entry name" value="RIBOSOMAL_S2_2"/>
    <property type="match status" value="1"/>
</dbReference>
<sequence length="258" mass="28926">MADVVTMKQLLEAGVHFGHQTRRWNPKMAPYIFTQRNGIYIIDLQKTIKMLDDAYNFMKAVAEDGGVFLFVGTKKQAQDSIAEEATRAGQYYVNQRWLGGTLTNWTTIQSRVRRLKQLKEMSEDGTFDVLPKKEVALLTKEMDKLERFLGGIEDMPRIPDVLFVVDPKKEKIAVHEANILGIPVVAMVDTNTDPDPIDVVIPSNDDAIRAIRLIAGAMADAIIEGKQGQDDEETLEVDFKENADGSEEIVSAEENPED</sequence>
<accession>Q5FJM3</accession>
<name>RS2_LACAC</name>
<organism>
    <name type="scientific">Lactobacillus acidophilus (strain ATCC 700396 / NCK56 / N2 / NCFM)</name>
    <dbReference type="NCBI Taxonomy" id="272621"/>
    <lineage>
        <taxon>Bacteria</taxon>
        <taxon>Bacillati</taxon>
        <taxon>Bacillota</taxon>
        <taxon>Bacilli</taxon>
        <taxon>Lactobacillales</taxon>
        <taxon>Lactobacillaceae</taxon>
        <taxon>Lactobacillus</taxon>
    </lineage>
</organism>
<comment type="similarity">
    <text evidence="1">Belongs to the universal ribosomal protein uS2 family.</text>
</comment>
<reference key="1">
    <citation type="journal article" date="2005" name="Proc. Natl. Acad. Sci. U.S.A.">
        <title>Complete genome sequence of the probiotic lactic acid bacterium Lactobacillus acidophilus NCFM.</title>
        <authorList>
            <person name="Altermann E."/>
            <person name="Russell W.M."/>
            <person name="Azcarate-Peril M.A."/>
            <person name="Barrangou R."/>
            <person name="Buck B.L."/>
            <person name="McAuliffe O."/>
            <person name="Souther N."/>
            <person name="Dobson A."/>
            <person name="Duong T."/>
            <person name="Callanan M."/>
            <person name="Lick S."/>
            <person name="Hamrick A."/>
            <person name="Cano R."/>
            <person name="Klaenhammer T.R."/>
        </authorList>
    </citation>
    <scope>NUCLEOTIDE SEQUENCE [LARGE SCALE GENOMIC DNA]</scope>
    <source>
        <strain>ATCC 700396 / NCK56 / N2 / NCFM</strain>
    </source>
</reference>
<keyword id="KW-1185">Reference proteome</keyword>
<keyword id="KW-0687">Ribonucleoprotein</keyword>
<keyword id="KW-0689">Ribosomal protein</keyword>
<feature type="chain" id="PRO_0000351999" description="Small ribosomal subunit protein uS2">
    <location>
        <begin position="1"/>
        <end position="258"/>
    </location>
</feature>
<feature type="region of interest" description="Disordered" evidence="2">
    <location>
        <begin position="226"/>
        <end position="258"/>
    </location>
</feature>
<feature type="compositionally biased region" description="Acidic residues" evidence="2">
    <location>
        <begin position="244"/>
        <end position="258"/>
    </location>
</feature>
<proteinExistence type="inferred from homology"/>
<protein>
    <recommendedName>
        <fullName evidence="1">Small ribosomal subunit protein uS2</fullName>
    </recommendedName>
    <alternativeName>
        <fullName evidence="3">30S ribosomal protein S2</fullName>
    </alternativeName>
</protein>
<gene>
    <name evidence="1" type="primary">rpsB</name>
    <name type="ordered locus">LBA1270</name>
</gene>
<evidence type="ECO:0000255" key="1">
    <source>
        <dbReference type="HAMAP-Rule" id="MF_00291"/>
    </source>
</evidence>
<evidence type="ECO:0000256" key="2">
    <source>
        <dbReference type="SAM" id="MobiDB-lite"/>
    </source>
</evidence>
<evidence type="ECO:0000305" key="3"/>